<sequence length="543" mass="59435">MASQGGPRRSLSVTTASLHGKKKSMDMAERGLDTGRRSLTVSRSPLGLTGGERTVKRLRLSKALTVPATTTIYEACKRMASRRVDALLLTDSNEMLCGILTDKDIATRVISQELNVEETPVSKVMTKNPMFVLSETLAVEALQKMVQGKFRHLPVVENGEVIALLDIAKCLYDAIARMERAAEKGKAIAAAVEGVEKSWGTNTSVPNTFIETLRDRMFRPSLSTIIPDDTKVLKVSPTDTVLTVAKKMVEFQSSCAVVIIEDKLRGIFTSKDILMRVVAENLPPSETLVETVMTQNPESTIVDTPIVEALHIMHEGKFLHLPVTDKEGDVVAVVDVIHVTHAAVATAGTTAGIGNEATNTMMQKFWDSAMALSPNEDDEDSRSESSMKVASEAETGKSFPFANTFSFKIEDKKHRKHRFISDTRSLTEVITAIIQRVGDDIDPDNFPQILYEDEDHDKVLLASDSDLQAAIEHAKSIGWKSLRLHLDDSREGKGRRRRRASGSAESMEYVETDAWAAAYSGVAAGAALVAGLGFMAFLRKFGH</sequence>
<organism>
    <name type="scientific">Arabidopsis thaliana</name>
    <name type="common">Mouse-ear cress</name>
    <dbReference type="NCBI Taxonomy" id="3702"/>
    <lineage>
        <taxon>Eukaryota</taxon>
        <taxon>Viridiplantae</taxon>
        <taxon>Streptophyta</taxon>
        <taxon>Embryophyta</taxon>
        <taxon>Tracheophyta</taxon>
        <taxon>Spermatophyta</taxon>
        <taxon>Magnoliopsida</taxon>
        <taxon>eudicotyledons</taxon>
        <taxon>Gunneridae</taxon>
        <taxon>Pentapetalae</taxon>
        <taxon>rosids</taxon>
        <taxon>malvids</taxon>
        <taxon>Brassicales</taxon>
        <taxon>Brassicaceae</taxon>
        <taxon>Camelineae</taxon>
        <taxon>Arabidopsis</taxon>
    </lineage>
</organism>
<comment type="subcellular location">
    <subcellularLocation>
        <location evidence="6">Membrane</location>
        <topology evidence="6">Single-pass membrane protein</topology>
    </subcellularLocation>
</comment>
<accession>Q9FMV3</accession>
<accession>Q0WMA2</accession>
<reference key="1">
    <citation type="journal article" date="1997" name="DNA Res.">
        <title>Structural analysis of Arabidopsis thaliana chromosome 5. III. Sequence features of the regions of 1,191,918 bp covered by seventeen physically assigned P1 clones.</title>
        <authorList>
            <person name="Nakamura Y."/>
            <person name="Sato S."/>
            <person name="Kaneko T."/>
            <person name="Kotani H."/>
            <person name="Asamizu E."/>
            <person name="Miyajima N."/>
            <person name="Tabata S."/>
        </authorList>
    </citation>
    <scope>NUCLEOTIDE SEQUENCE [LARGE SCALE GENOMIC DNA]</scope>
    <source>
        <strain>cv. Columbia</strain>
    </source>
</reference>
<reference key="2">
    <citation type="journal article" date="2017" name="Plant J.">
        <title>Araport11: a complete reannotation of the Arabidopsis thaliana reference genome.</title>
        <authorList>
            <person name="Cheng C.Y."/>
            <person name="Krishnakumar V."/>
            <person name="Chan A.P."/>
            <person name="Thibaud-Nissen F."/>
            <person name="Schobel S."/>
            <person name="Town C.D."/>
        </authorList>
    </citation>
    <scope>GENOME REANNOTATION</scope>
    <source>
        <strain>cv. Columbia</strain>
    </source>
</reference>
<reference key="3">
    <citation type="submission" date="2006-07" db="EMBL/GenBank/DDBJ databases">
        <title>Large-scale analysis of RIKEN Arabidopsis full-length (RAFL) cDNAs.</title>
        <authorList>
            <person name="Totoki Y."/>
            <person name="Seki M."/>
            <person name="Ishida J."/>
            <person name="Nakajima M."/>
            <person name="Enju A."/>
            <person name="Kamiya A."/>
            <person name="Narusaka M."/>
            <person name="Shin-i T."/>
            <person name="Nakagawa M."/>
            <person name="Sakamoto N."/>
            <person name="Oishi K."/>
            <person name="Kohara Y."/>
            <person name="Kobayashi M."/>
            <person name="Toyoda A."/>
            <person name="Sakaki Y."/>
            <person name="Sakurai T."/>
            <person name="Iida K."/>
            <person name="Akiyama K."/>
            <person name="Satou M."/>
            <person name="Toyoda T."/>
            <person name="Konagaya A."/>
            <person name="Carninci P."/>
            <person name="Kawai J."/>
            <person name="Hayashizaki Y."/>
            <person name="Shinozaki K."/>
        </authorList>
    </citation>
    <scope>NUCLEOTIDE SEQUENCE [LARGE SCALE MRNA]</scope>
    <source>
        <strain>cv. Columbia</strain>
    </source>
</reference>
<reference key="4">
    <citation type="journal article" date="2009" name="BMC Genomics">
        <title>Genome wide expression analysis of CBS domain containing proteins in Arabidopsis thaliana (L.) Heynh and Oryza sativa L. reveals their developmental and stress regulation.</title>
        <authorList>
            <person name="Kushwaha H.R."/>
            <person name="Singh A.K."/>
            <person name="Sopory S.K."/>
            <person name="Singla-Pareek S.L."/>
            <person name="Pareek A."/>
        </authorList>
    </citation>
    <scope>GENE FAMILY</scope>
    <scope>NOMENCLATURE</scope>
</reference>
<reference key="5">
    <citation type="journal article" date="2009" name="Plant Physiol.">
        <title>Large-scale Arabidopsis phosphoproteome profiling reveals novel chloroplast kinase substrates and phosphorylation networks.</title>
        <authorList>
            <person name="Reiland S."/>
            <person name="Messerli G."/>
            <person name="Baerenfaller K."/>
            <person name="Gerrits B."/>
            <person name="Endler A."/>
            <person name="Grossmann J."/>
            <person name="Gruissem W."/>
            <person name="Baginsky S."/>
        </authorList>
    </citation>
    <scope>IDENTIFICATION BY MASS SPECTROMETRY [LARGE SCALE ANALYSIS]</scope>
</reference>
<keyword id="KW-0129">CBS domain</keyword>
<keyword id="KW-0472">Membrane</keyword>
<keyword id="KW-0597">Phosphoprotein</keyword>
<keyword id="KW-1185">Reference proteome</keyword>
<keyword id="KW-0677">Repeat</keyword>
<keyword id="KW-0812">Transmembrane</keyword>
<keyword id="KW-1133">Transmembrane helix</keyword>
<feature type="chain" id="PRO_0000412227" description="CBS domain-containing protein CBSCBSPB1">
    <location>
        <begin position="1"/>
        <end position="543"/>
    </location>
</feature>
<feature type="transmembrane region" description="Helical" evidence="2">
    <location>
        <begin position="518"/>
        <end position="538"/>
    </location>
</feature>
<feature type="domain" description="CBS 1" evidence="3">
    <location>
        <begin position="59"/>
        <end position="118"/>
    </location>
</feature>
<feature type="domain" description="CBS 2" evidence="3">
    <location>
        <begin position="125"/>
        <end position="183"/>
    </location>
</feature>
<feature type="domain" description="CBS 3" evidence="3">
    <location>
        <begin position="225"/>
        <end position="285"/>
    </location>
</feature>
<feature type="domain" description="CBS 4" evidence="3">
    <location>
        <begin position="293"/>
        <end position="350"/>
    </location>
</feature>
<feature type="domain" description="PB1" evidence="4">
    <location>
        <begin position="402"/>
        <end position="489"/>
    </location>
</feature>
<feature type="region of interest" description="Disordered" evidence="5">
    <location>
        <begin position="1"/>
        <end position="35"/>
    </location>
</feature>
<feature type="region of interest" description="Disordered" evidence="5">
    <location>
        <begin position="372"/>
        <end position="393"/>
    </location>
</feature>
<feature type="compositionally biased region" description="Basic and acidic residues" evidence="5">
    <location>
        <begin position="23"/>
        <end position="35"/>
    </location>
</feature>
<feature type="modified residue" description="Phosphoserine" evidence="1">
    <location>
        <position position="17"/>
    </location>
</feature>
<name>Y5349_ARATH</name>
<protein>
    <recommendedName>
        <fullName>CBS domain-containing protein CBSCBSPB1</fullName>
    </recommendedName>
</protein>
<dbReference type="EMBL" id="AB007649">
    <property type="protein sequence ID" value="BAB08814.1"/>
    <property type="molecule type" value="Genomic_DNA"/>
</dbReference>
<dbReference type="EMBL" id="CP002688">
    <property type="protein sequence ID" value="AED97758.1"/>
    <property type="molecule type" value="Genomic_DNA"/>
</dbReference>
<dbReference type="EMBL" id="CP002688">
    <property type="protein sequence ID" value="ANM69496.1"/>
    <property type="molecule type" value="Genomic_DNA"/>
</dbReference>
<dbReference type="EMBL" id="AK228838">
    <property type="protein sequence ID" value="BAF00733.1"/>
    <property type="molecule type" value="mRNA"/>
</dbReference>
<dbReference type="EMBL" id="AK229928">
    <property type="protein sequence ID" value="BAF01754.1"/>
    <property type="molecule type" value="mRNA"/>
</dbReference>
<dbReference type="RefSeq" id="NP_001331166.1">
    <property type="nucleotide sequence ID" value="NM_001345594.1"/>
</dbReference>
<dbReference type="RefSeq" id="NP_201154.1">
    <property type="nucleotide sequence ID" value="NM_125744.3"/>
</dbReference>
<dbReference type="SMR" id="Q9FMV3"/>
<dbReference type="FunCoup" id="Q9FMV3">
    <property type="interactions" value="139"/>
</dbReference>
<dbReference type="STRING" id="3702.Q9FMV3"/>
<dbReference type="iPTMnet" id="Q9FMV3"/>
<dbReference type="PaxDb" id="3702-AT5G63490.1"/>
<dbReference type="ProteomicsDB" id="243136"/>
<dbReference type="EnsemblPlants" id="AT5G63490.1">
    <property type="protein sequence ID" value="AT5G63490.1"/>
    <property type="gene ID" value="AT5G63490"/>
</dbReference>
<dbReference type="EnsemblPlants" id="AT5G63490.2">
    <property type="protein sequence ID" value="AT5G63490.2"/>
    <property type="gene ID" value="AT5G63490"/>
</dbReference>
<dbReference type="GeneID" id="836468"/>
<dbReference type="Gramene" id="AT5G63490.1">
    <property type="protein sequence ID" value="AT5G63490.1"/>
    <property type="gene ID" value="AT5G63490"/>
</dbReference>
<dbReference type="Gramene" id="AT5G63490.2">
    <property type="protein sequence ID" value="AT5G63490.2"/>
    <property type="gene ID" value="AT5G63490"/>
</dbReference>
<dbReference type="KEGG" id="ath:AT5G63490"/>
<dbReference type="Araport" id="AT5G63490"/>
<dbReference type="TAIR" id="AT5G63490"/>
<dbReference type="eggNOG" id="ENOG502QVK2">
    <property type="taxonomic scope" value="Eukaryota"/>
</dbReference>
<dbReference type="HOGENOM" id="CLU_009026_3_0_1"/>
<dbReference type="InParanoid" id="Q9FMV3"/>
<dbReference type="OMA" id="CAVVIIE"/>
<dbReference type="OrthoDB" id="418595at2759"/>
<dbReference type="PhylomeDB" id="Q9FMV3"/>
<dbReference type="PRO" id="PR:Q9FMV3"/>
<dbReference type="Proteomes" id="UP000006548">
    <property type="component" value="Chromosome 5"/>
</dbReference>
<dbReference type="ExpressionAtlas" id="Q9FMV3">
    <property type="expression patterns" value="baseline and differential"/>
</dbReference>
<dbReference type="GO" id="GO:0016020">
    <property type="term" value="C:membrane"/>
    <property type="evidence" value="ECO:0007669"/>
    <property type="project" value="UniProtKB-SubCell"/>
</dbReference>
<dbReference type="CDD" id="cd17781">
    <property type="entry name" value="CBS_pair_MUG70_1"/>
    <property type="match status" value="1"/>
</dbReference>
<dbReference type="CDD" id="cd17782">
    <property type="entry name" value="CBS_pair_MUG70_2"/>
    <property type="match status" value="1"/>
</dbReference>
<dbReference type="Gene3D" id="3.10.580.10">
    <property type="entry name" value="CBS-domain"/>
    <property type="match status" value="2"/>
</dbReference>
<dbReference type="Gene3D" id="3.10.20.90">
    <property type="entry name" value="Phosphatidylinositol 3-kinase Catalytic Subunit, Chain A, domain 1"/>
    <property type="match status" value="1"/>
</dbReference>
<dbReference type="InterPro" id="IPR050511">
    <property type="entry name" value="AMPK_gamma/SDS23_families"/>
</dbReference>
<dbReference type="InterPro" id="IPR000644">
    <property type="entry name" value="CBS_dom"/>
</dbReference>
<dbReference type="InterPro" id="IPR046342">
    <property type="entry name" value="CBS_dom_sf"/>
</dbReference>
<dbReference type="InterPro" id="IPR053793">
    <property type="entry name" value="PB1-like"/>
</dbReference>
<dbReference type="InterPro" id="IPR000270">
    <property type="entry name" value="PB1_dom"/>
</dbReference>
<dbReference type="PANTHER" id="PTHR13780">
    <property type="entry name" value="AMP-ACTIVATED PROTEIN KINASE, GAMMA REGULATORY SUBUNIT"/>
    <property type="match status" value="1"/>
</dbReference>
<dbReference type="PANTHER" id="PTHR13780:SF48">
    <property type="entry name" value="CBS DOMAIN-CONTAINING PROTEIN CBSCBSPB1"/>
    <property type="match status" value="1"/>
</dbReference>
<dbReference type="Pfam" id="PF00571">
    <property type="entry name" value="CBS"/>
    <property type="match status" value="4"/>
</dbReference>
<dbReference type="Pfam" id="PF00564">
    <property type="entry name" value="PB1"/>
    <property type="match status" value="1"/>
</dbReference>
<dbReference type="SMART" id="SM00116">
    <property type="entry name" value="CBS"/>
    <property type="match status" value="4"/>
</dbReference>
<dbReference type="SMART" id="SM00666">
    <property type="entry name" value="PB1"/>
    <property type="match status" value="1"/>
</dbReference>
<dbReference type="SUPFAM" id="SSF54277">
    <property type="entry name" value="CAD &amp; PB1 domains"/>
    <property type="match status" value="1"/>
</dbReference>
<dbReference type="SUPFAM" id="SSF54631">
    <property type="entry name" value="CBS-domain pair"/>
    <property type="match status" value="2"/>
</dbReference>
<dbReference type="PROSITE" id="PS51371">
    <property type="entry name" value="CBS"/>
    <property type="match status" value="4"/>
</dbReference>
<dbReference type="PROSITE" id="PS51745">
    <property type="entry name" value="PB1"/>
    <property type="match status" value="1"/>
</dbReference>
<proteinExistence type="evidence at protein level"/>
<evidence type="ECO:0000250" key="1">
    <source>
        <dbReference type="UniProtKB" id="Q0WLC7"/>
    </source>
</evidence>
<evidence type="ECO:0000255" key="2"/>
<evidence type="ECO:0000255" key="3">
    <source>
        <dbReference type="PROSITE-ProRule" id="PRU00703"/>
    </source>
</evidence>
<evidence type="ECO:0000255" key="4">
    <source>
        <dbReference type="PROSITE-ProRule" id="PRU01081"/>
    </source>
</evidence>
<evidence type="ECO:0000256" key="5">
    <source>
        <dbReference type="SAM" id="MobiDB-lite"/>
    </source>
</evidence>
<evidence type="ECO:0000305" key="6"/>
<gene>
    <name type="primary">CBSCBSPB1</name>
    <name type="ordered locus">At5g63490</name>
    <name type="ORF">MLE2.12</name>
</gene>